<reference key="1">
    <citation type="journal article" date="2009" name="Infect. Immun.">
        <title>Comparative genomics reveal extensive transposon-mediated genomic plasticity and diversity among potential effector proteins within the genus Coxiella.</title>
        <authorList>
            <person name="Beare P.A."/>
            <person name="Unsworth N."/>
            <person name="Andoh M."/>
            <person name="Voth D.E."/>
            <person name="Omsland A."/>
            <person name="Gilk S.D."/>
            <person name="Williams K.P."/>
            <person name="Sobral B.W."/>
            <person name="Kupko J.J. III"/>
            <person name="Porcella S.F."/>
            <person name="Samuel J.E."/>
            <person name="Heinzen R.A."/>
        </authorList>
    </citation>
    <scope>NUCLEOTIDE SEQUENCE [LARGE SCALE GENOMIC DNA]</scope>
    <source>
        <strain>CbuK_Q154</strain>
    </source>
</reference>
<organism>
    <name type="scientific">Coxiella burnetii (strain CbuK_Q154)</name>
    <name type="common">Coxiella burnetii (strain Q154)</name>
    <dbReference type="NCBI Taxonomy" id="434924"/>
    <lineage>
        <taxon>Bacteria</taxon>
        <taxon>Pseudomonadati</taxon>
        <taxon>Pseudomonadota</taxon>
        <taxon>Gammaproteobacteria</taxon>
        <taxon>Legionellales</taxon>
        <taxon>Coxiellaceae</taxon>
        <taxon>Coxiella</taxon>
    </lineage>
</organism>
<evidence type="ECO:0000255" key="1">
    <source>
        <dbReference type="HAMAP-Rule" id="MF_01365"/>
    </source>
</evidence>
<evidence type="ECO:0000305" key="2"/>
<sequence length="178" mass="19196">MVSRVAKNPIKIPTGVEVNVAGQQITVKGKLGTLTRVIHRAVKVTKTDAELQTICANDSPGSNALAGTARAVLANMVQGVHTGFQRKLVMVGVGYRAKAEGKKLNLTVGLSHPVNIEMPEGITVETPSQTEIIVKGADKQRVSQVAANIREIRPPEPYKGKGIRYDNERVILKEAKKK</sequence>
<keyword id="KW-0687">Ribonucleoprotein</keyword>
<keyword id="KW-0689">Ribosomal protein</keyword>
<keyword id="KW-0694">RNA-binding</keyword>
<keyword id="KW-0699">rRNA-binding</keyword>
<comment type="function">
    <text evidence="1">This protein binds to the 23S rRNA, and is important in its secondary structure. It is located near the subunit interface in the base of the L7/L12 stalk, and near the tRNA binding site of the peptidyltransferase center.</text>
</comment>
<comment type="subunit">
    <text evidence="1">Part of the 50S ribosomal subunit.</text>
</comment>
<comment type="similarity">
    <text evidence="1">Belongs to the universal ribosomal protein uL6 family.</text>
</comment>
<proteinExistence type="inferred from homology"/>
<protein>
    <recommendedName>
        <fullName evidence="1">Large ribosomal subunit protein uL6</fullName>
    </recommendedName>
    <alternativeName>
        <fullName evidence="2">50S ribosomal protein L6</fullName>
    </alternativeName>
</protein>
<accession>B6J5E7</accession>
<feature type="chain" id="PRO_1000143969" description="Large ribosomal subunit protein uL6">
    <location>
        <begin position="1"/>
        <end position="178"/>
    </location>
</feature>
<name>RL6_COXB1</name>
<gene>
    <name evidence="1" type="primary">rplF</name>
    <name type="ordered locus">CbuK_0448</name>
</gene>
<dbReference type="EMBL" id="CP001020">
    <property type="protein sequence ID" value="ACJ19731.1"/>
    <property type="molecule type" value="Genomic_DNA"/>
</dbReference>
<dbReference type="RefSeq" id="WP_005771518.1">
    <property type="nucleotide sequence ID" value="NC_011528.1"/>
</dbReference>
<dbReference type="SMR" id="B6J5E7"/>
<dbReference type="KEGG" id="cbc:CbuK_0448"/>
<dbReference type="HOGENOM" id="CLU_065464_1_2_6"/>
<dbReference type="GO" id="GO:0022625">
    <property type="term" value="C:cytosolic large ribosomal subunit"/>
    <property type="evidence" value="ECO:0007669"/>
    <property type="project" value="TreeGrafter"/>
</dbReference>
<dbReference type="GO" id="GO:0019843">
    <property type="term" value="F:rRNA binding"/>
    <property type="evidence" value="ECO:0007669"/>
    <property type="project" value="UniProtKB-UniRule"/>
</dbReference>
<dbReference type="GO" id="GO:0003735">
    <property type="term" value="F:structural constituent of ribosome"/>
    <property type="evidence" value="ECO:0007669"/>
    <property type="project" value="InterPro"/>
</dbReference>
<dbReference type="GO" id="GO:0002181">
    <property type="term" value="P:cytoplasmic translation"/>
    <property type="evidence" value="ECO:0007669"/>
    <property type="project" value="TreeGrafter"/>
</dbReference>
<dbReference type="FunFam" id="3.90.930.12:FF:000001">
    <property type="entry name" value="50S ribosomal protein L6"/>
    <property type="match status" value="1"/>
</dbReference>
<dbReference type="FunFam" id="3.90.930.12:FF:000002">
    <property type="entry name" value="50S ribosomal protein L6"/>
    <property type="match status" value="1"/>
</dbReference>
<dbReference type="Gene3D" id="3.90.930.12">
    <property type="entry name" value="Ribosomal protein L6, alpha-beta domain"/>
    <property type="match status" value="2"/>
</dbReference>
<dbReference type="HAMAP" id="MF_01365_B">
    <property type="entry name" value="Ribosomal_uL6_B"/>
    <property type="match status" value="1"/>
</dbReference>
<dbReference type="InterPro" id="IPR000702">
    <property type="entry name" value="Ribosomal_uL6-like"/>
</dbReference>
<dbReference type="InterPro" id="IPR036789">
    <property type="entry name" value="Ribosomal_uL6-like_a/b-dom_sf"/>
</dbReference>
<dbReference type="InterPro" id="IPR020040">
    <property type="entry name" value="Ribosomal_uL6_a/b-dom"/>
</dbReference>
<dbReference type="InterPro" id="IPR019906">
    <property type="entry name" value="Ribosomal_uL6_bac-type"/>
</dbReference>
<dbReference type="InterPro" id="IPR002358">
    <property type="entry name" value="Ribosomal_uL6_CS"/>
</dbReference>
<dbReference type="NCBIfam" id="TIGR03654">
    <property type="entry name" value="L6_bact"/>
    <property type="match status" value="1"/>
</dbReference>
<dbReference type="PANTHER" id="PTHR11655">
    <property type="entry name" value="60S/50S RIBOSOMAL PROTEIN L6/L9"/>
    <property type="match status" value="1"/>
</dbReference>
<dbReference type="PANTHER" id="PTHR11655:SF14">
    <property type="entry name" value="LARGE RIBOSOMAL SUBUNIT PROTEIN UL6M"/>
    <property type="match status" value="1"/>
</dbReference>
<dbReference type="Pfam" id="PF00347">
    <property type="entry name" value="Ribosomal_L6"/>
    <property type="match status" value="2"/>
</dbReference>
<dbReference type="PIRSF" id="PIRSF002162">
    <property type="entry name" value="Ribosomal_L6"/>
    <property type="match status" value="1"/>
</dbReference>
<dbReference type="PRINTS" id="PR00059">
    <property type="entry name" value="RIBOSOMALL6"/>
</dbReference>
<dbReference type="SUPFAM" id="SSF56053">
    <property type="entry name" value="Ribosomal protein L6"/>
    <property type="match status" value="2"/>
</dbReference>
<dbReference type="PROSITE" id="PS00525">
    <property type="entry name" value="RIBOSOMAL_L6_1"/>
    <property type="match status" value="1"/>
</dbReference>